<protein>
    <recommendedName>
        <fullName evidence="1">Thiamine-phosphate synthase</fullName>
        <shortName evidence="1">TP synthase</shortName>
        <shortName evidence="1">TPS</shortName>
        <ecNumber evidence="1">2.5.1.3</ecNumber>
    </recommendedName>
    <alternativeName>
        <fullName evidence="1">Thiamine-phosphate pyrophosphorylase</fullName>
        <shortName evidence="1">TMP pyrophosphorylase</shortName>
        <shortName evidence="1">TMP-PPase</shortName>
    </alternativeName>
</protein>
<dbReference type="EC" id="2.5.1.3" evidence="1"/>
<dbReference type="EMBL" id="AM406671">
    <property type="protein sequence ID" value="CAL97809.1"/>
    <property type="molecule type" value="Genomic_DNA"/>
</dbReference>
<dbReference type="RefSeq" id="WP_011835109.1">
    <property type="nucleotide sequence ID" value="NC_009004.1"/>
</dbReference>
<dbReference type="SMR" id="A2RKJ7"/>
<dbReference type="STRING" id="416870.llmg_1218"/>
<dbReference type="KEGG" id="llm:llmg_1218"/>
<dbReference type="eggNOG" id="COG0352">
    <property type="taxonomic scope" value="Bacteria"/>
</dbReference>
<dbReference type="HOGENOM" id="CLU_018272_3_2_9"/>
<dbReference type="OrthoDB" id="9812206at2"/>
<dbReference type="PhylomeDB" id="A2RKJ7"/>
<dbReference type="UniPathway" id="UPA00060">
    <property type="reaction ID" value="UER00141"/>
</dbReference>
<dbReference type="Proteomes" id="UP000000364">
    <property type="component" value="Chromosome"/>
</dbReference>
<dbReference type="GO" id="GO:0005737">
    <property type="term" value="C:cytoplasm"/>
    <property type="evidence" value="ECO:0007669"/>
    <property type="project" value="TreeGrafter"/>
</dbReference>
<dbReference type="GO" id="GO:0000287">
    <property type="term" value="F:magnesium ion binding"/>
    <property type="evidence" value="ECO:0007669"/>
    <property type="project" value="UniProtKB-UniRule"/>
</dbReference>
<dbReference type="GO" id="GO:0004789">
    <property type="term" value="F:thiamine-phosphate diphosphorylase activity"/>
    <property type="evidence" value="ECO:0007669"/>
    <property type="project" value="UniProtKB-UniRule"/>
</dbReference>
<dbReference type="GO" id="GO:0009228">
    <property type="term" value="P:thiamine biosynthetic process"/>
    <property type="evidence" value="ECO:0007669"/>
    <property type="project" value="UniProtKB-KW"/>
</dbReference>
<dbReference type="GO" id="GO:0009229">
    <property type="term" value="P:thiamine diphosphate biosynthetic process"/>
    <property type="evidence" value="ECO:0007669"/>
    <property type="project" value="UniProtKB-UniRule"/>
</dbReference>
<dbReference type="CDD" id="cd00564">
    <property type="entry name" value="TMP_TenI"/>
    <property type="match status" value="1"/>
</dbReference>
<dbReference type="FunFam" id="3.20.20.70:FF:000096">
    <property type="entry name" value="Thiamine-phosphate synthase"/>
    <property type="match status" value="1"/>
</dbReference>
<dbReference type="Gene3D" id="3.20.20.70">
    <property type="entry name" value="Aldolase class I"/>
    <property type="match status" value="1"/>
</dbReference>
<dbReference type="HAMAP" id="MF_00097">
    <property type="entry name" value="TMP_synthase"/>
    <property type="match status" value="1"/>
</dbReference>
<dbReference type="InterPro" id="IPR013785">
    <property type="entry name" value="Aldolase_TIM"/>
</dbReference>
<dbReference type="InterPro" id="IPR036206">
    <property type="entry name" value="ThiamineP_synth_sf"/>
</dbReference>
<dbReference type="InterPro" id="IPR022998">
    <property type="entry name" value="ThiamineP_synth_TenI"/>
</dbReference>
<dbReference type="InterPro" id="IPR034291">
    <property type="entry name" value="TMP_synthase"/>
</dbReference>
<dbReference type="NCBIfam" id="TIGR00693">
    <property type="entry name" value="thiE"/>
    <property type="match status" value="1"/>
</dbReference>
<dbReference type="PANTHER" id="PTHR20857">
    <property type="entry name" value="THIAMINE-PHOSPHATE PYROPHOSPHORYLASE"/>
    <property type="match status" value="1"/>
</dbReference>
<dbReference type="PANTHER" id="PTHR20857:SF15">
    <property type="entry name" value="THIAMINE-PHOSPHATE SYNTHASE"/>
    <property type="match status" value="1"/>
</dbReference>
<dbReference type="Pfam" id="PF02581">
    <property type="entry name" value="TMP-TENI"/>
    <property type="match status" value="1"/>
</dbReference>
<dbReference type="SUPFAM" id="SSF51391">
    <property type="entry name" value="Thiamin phosphate synthase"/>
    <property type="match status" value="1"/>
</dbReference>
<sequence>MTKKTLDLSVYFIAGSQNFSECSLDEATQKIALIIKSGVTVYQFRDKGTIYKEQKQRLSIAQKLQKVSEEAGVSFIVNDDVELARELNADGIHIGQTDESVSKVREKVGQEMWLGLSVTNADELKTAQSSGADYLGIGPIYPTNSKNDAAKPIGIKDLRLMLLENQLPIVGIGGITQDSLTELSAIGLDGLAVISLLTEAENPKKVAQMIRQKITKNG</sequence>
<gene>
    <name evidence="1" type="primary">thiE</name>
    <name type="ordered locus">llmg_1218</name>
</gene>
<name>THIE_LACLM</name>
<evidence type="ECO:0000255" key="1">
    <source>
        <dbReference type="HAMAP-Rule" id="MF_00097"/>
    </source>
</evidence>
<reference key="1">
    <citation type="journal article" date="2007" name="J. Bacteriol.">
        <title>The complete genome sequence of the lactic acid bacterial paradigm Lactococcus lactis subsp. cremoris MG1363.</title>
        <authorList>
            <person name="Wegmann U."/>
            <person name="O'Connell-Motherway M."/>
            <person name="Zomer A."/>
            <person name="Buist G."/>
            <person name="Shearman C."/>
            <person name="Canchaya C."/>
            <person name="Ventura M."/>
            <person name="Goesmann A."/>
            <person name="Gasson M.J."/>
            <person name="Kuipers O.P."/>
            <person name="van Sinderen D."/>
            <person name="Kok J."/>
        </authorList>
    </citation>
    <scope>NUCLEOTIDE SEQUENCE [LARGE SCALE GENOMIC DNA]</scope>
    <source>
        <strain>MG1363</strain>
    </source>
</reference>
<organism>
    <name type="scientific">Lactococcus lactis subsp. cremoris (strain MG1363)</name>
    <dbReference type="NCBI Taxonomy" id="416870"/>
    <lineage>
        <taxon>Bacteria</taxon>
        <taxon>Bacillati</taxon>
        <taxon>Bacillota</taxon>
        <taxon>Bacilli</taxon>
        <taxon>Lactobacillales</taxon>
        <taxon>Streptococcaceae</taxon>
        <taxon>Lactococcus</taxon>
        <taxon>Lactococcus cremoris subsp. cremoris</taxon>
    </lineage>
</organism>
<feature type="chain" id="PRO_1000008146" description="Thiamine-phosphate synthase">
    <location>
        <begin position="1"/>
        <end position="218"/>
    </location>
</feature>
<feature type="binding site" evidence="1">
    <location>
        <begin position="43"/>
        <end position="47"/>
    </location>
    <ligand>
        <name>4-amino-2-methyl-5-(diphosphooxymethyl)pyrimidine</name>
        <dbReference type="ChEBI" id="CHEBI:57841"/>
    </ligand>
</feature>
<feature type="binding site" evidence="1">
    <location>
        <position position="78"/>
    </location>
    <ligand>
        <name>4-amino-2-methyl-5-(diphosphooxymethyl)pyrimidine</name>
        <dbReference type="ChEBI" id="CHEBI:57841"/>
    </ligand>
</feature>
<feature type="binding site" evidence="1">
    <location>
        <position position="79"/>
    </location>
    <ligand>
        <name>Mg(2+)</name>
        <dbReference type="ChEBI" id="CHEBI:18420"/>
    </ligand>
</feature>
<feature type="binding site" evidence="1">
    <location>
        <position position="98"/>
    </location>
    <ligand>
        <name>Mg(2+)</name>
        <dbReference type="ChEBI" id="CHEBI:18420"/>
    </ligand>
</feature>
<feature type="binding site" evidence="1">
    <location>
        <position position="117"/>
    </location>
    <ligand>
        <name>4-amino-2-methyl-5-(diphosphooxymethyl)pyrimidine</name>
        <dbReference type="ChEBI" id="CHEBI:57841"/>
    </ligand>
</feature>
<feature type="binding site" evidence="1">
    <location>
        <begin position="143"/>
        <end position="145"/>
    </location>
    <ligand>
        <name>2-[(2R,5Z)-2-carboxy-4-methylthiazol-5(2H)-ylidene]ethyl phosphate</name>
        <dbReference type="ChEBI" id="CHEBI:62899"/>
    </ligand>
</feature>
<feature type="binding site" evidence="1">
    <location>
        <position position="146"/>
    </location>
    <ligand>
        <name>4-amino-2-methyl-5-(diphosphooxymethyl)pyrimidine</name>
        <dbReference type="ChEBI" id="CHEBI:57841"/>
    </ligand>
</feature>
<feature type="binding site" evidence="1">
    <location>
        <position position="174"/>
    </location>
    <ligand>
        <name>2-[(2R,5Z)-2-carboxy-4-methylthiazol-5(2H)-ylidene]ethyl phosphate</name>
        <dbReference type="ChEBI" id="CHEBI:62899"/>
    </ligand>
</feature>
<feature type="binding site" evidence="1">
    <location>
        <begin position="194"/>
        <end position="195"/>
    </location>
    <ligand>
        <name>2-[(2R,5Z)-2-carboxy-4-methylthiazol-5(2H)-ylidene]ethyl phosphate</name>
        <dbReference type="ChEBI" id="CHEBI:62899"/>
    </ligand>
</feature>
<keyword id="KW-0460">Magnesium</keyword>
<keyword id="KW-0479">Metal-binding</keyword>
<keyword id="KW-0784">Thiamine biosynthesis</keyword>
<keyword id="KW-0808">Transferase</keyword>
<proteinExistence type="inferred from homology"/>
<accession>A2RKJ7</accession>
<comment type="function">
    <text evidence="1">Condenses 4-methyl-5-(beta-hydroxyethyl)thiazole monophosphate (THZ-P) and 2-methyl-4-amino-5-hydroxymethyl pyrimidine pyrophosphate (HMP-PP) to form thiamine monophosphate (TMP).</text>
</comment>
<comment type="catalytic activity">
    <reaction evidence="1">
        <text>2-[(2R,5Z)-2-carboxy-4-methylthiazol-5(2H)-ylidene]ethyl phosphate + 4-amino-2-methyl-5-(diphosphooxymethyl)pyrimidine + 2 H(+) = thiamine phosphate + CO2 + diphosphate</text>
        <dbReference type="Rhea" id="RHEA:47844"/>
        <dbReference type="ChEBI" id="CHEBI:15378"/>
        <dbReference type="ChEBI" id="CHEBI:16526"/>
        <dbReference type="ChEBI" id="CHEBI:33019"/>
        <dbReference type="ChEBI" id="CHEBI:37575"/>
        <dbReference type="ChEBI" id="CHEBI:57841"/>
        <dbReference type="ChEBI" id="CHEBI:62899"/>
        <dbReference type="EC" id="2.5.1.3"/>
    </reaction>
</comment>
<comment type="catalytic activity">
    <reaction evidence="1">
        <text>2-(2-carboxy-4-methylthiazol-5-yl)ethyl phosphate + 4-amino-2-methyl-5-(diphosphooxymethyl)pyrimidine + 2 H(+) = thiamine phosphate + CO2 + diphosphate</text>
        <dbReference type="Rhea" id="RHEA:47848"/>
        <dbReference type="ChEBI" id="CHEBI:15378"/>
        <dbReference type="ChEBI" id="CHEBI:16526"/>
        <dbReference type="ChEBI" id="CHEBI:33019"/>
        <dbReference type="ChEBI" id="CHEBI:37575"/>
        <dbReference type="ChEBI" id="CHEBI:57841"/>
        <dbReference type="ChEBI" id="CHEBI:62890"/>
        <dbReference type="EC" id="2.5.1.3"/>
    </reaction>
</comment>
<comment type="catalytic activity">
    <reaction evidence="1">
        <text>4-methyl-5-(2-phosphooxyethyl)-thiazole + 4-amino-2-methyl-5-(diphosphooxymethyl)pyrimidine + H(+) = thiamine phosphate + diphosphate</text>
        <dbReference type="Rhea" id="RHEA:22328"/>
        <dbReference type="ChEBI" id="CHEBI:15378"/>
        <dbReference type="ChEBI" id="CHEBI:33019"/>
        <dbReference type="ChEBI" id="CHEBI:37575"/>
        <dbReference type="ChEBI" id="CHEBI:57841"/>
        <dbReference type="ChEBI" id="CHEBI:58296"/>
        <dbReference type="EC" id="2.5.1.3"/>
    </reaction>
</comment>
<comment type="cofactor">
    <cofactor evidence="1">
        <name>Mg(2+)</name>
        <dbReference type="ChEBI" id="CHEBI:18420"/>
    </cofactor>
    <text evidence="1">Binds 1 Mg(2+) ion per subunit.</text>
</comment>
<comment type="pathway">
    <text evidence="1">Cofactor biosynthesis; thiamine diphosphate biosynthesis; thiamine phosphate from 4-amino-2-methyl-5-diphosphomethylpyrimidine and 4-methyl-5-(2-phosphoethyl)-thiazole: step 1/1.</text>
</comment>
<comment type="similarity">
    <text evidence="1">Belongs to the thiamine-phosphate synthase family.</text>
</comment>